<organism>
    <name type="scientific">Influenza A virus (strain A/Kitakyushu/159/1993 H3N2)</name>
    <dbReference type="NCBI Taxonomy" id="62478"/>
    <lineage>
        <taxon>Viruses</taxon>
        <taxon>Riboviria</taxon>
        <taxon>Orthornavirae</taxon>
        <taxon>Negarnaviricota</taxon>
        <taxon>Polyploviricotina</taxon>
        <taxon>Insthoviricetes</taxon>
        <taxon>Articulavirales</taxon>
        <taxon>Orthomyxoviridae</taxon>
        <taxon>Alphainfluenzavirus</taxon>
        <taxon>Alphainfluenzavirus influenzae</taxon>
        <taxon>Influenza A virus</taxon>
    </lineage>
</organism>
<proteinExistence type="inferred from homology"/>
<dbReference type="EC" id="3.2.1.18" evidence="1"/>
<dbReference type="EMBL" id="AF038260">
    <property type="protein sequence ID" value="AAC63468.1"/>
    <property type="molecule type" value="Genomic_RNA"/>
</dbReference>
<dbReference type="SMR" id="O91744"/>
<dbReference type="CAZy" id="GH34">
    <property type="family name" value="Glycoside Hydrolase Family 34"/>
</dbReference>
<dbReference type="GlyCosmos" id="O91744">
    <property type="glycosylation" value="8 sites, No reported glycans"/>
</dbReference>
<dbReference type="SABIO-RK" id="O91744"/>
<dbReference type="GO" id="GO:0020002">
    <property type="term" value="C:host cell plasma membrane"/>
    <property type="evidence" value="ECO:0007669"/>
    <property type="project" value="UniProtKB-SubCell"/>
</dbReference>
<dbReference type="GO" id="GO:0016020">
    <property type="term" value="C:membrane"/>
    <property type="evidence" value="ECO:0007669"/>
    <property type="project" value="UniProtKB-UniRule"/>
</dbReference>
<dbReference type="GO" id="GO:0055036">
    <property type="term" value="C:virion membrane"/>
    <property type="evidence" value="ECO:0007669"/>
    <property type="project" value="UniProtKB-SubCell"/>
</dbReference>
<dbReference type="GO" id="GO:0004308">
    <property type="term" value="F:exo-alpha-sialidase activity"/>
    <property type="evidence" value="ECO:0007669"/>
    <property type="project" value="UniProtKB-UniRule"/>
</dbReference>
<dbReference type="GO" id="GO:0046872">
    <property type="term" value="F:metal ion binding"/>
    <property type="evidence" value="ECO:0007669"/>
    <property type="project" value="UniProtKB-UniRule"/>
</dbReference>
<dbReference type="GO" id="GO:0005975">
    <property type="term" value="P:carbohydrate metabolic process"/>
    <property type="evidence" value="ECO:0007669"/>
    <property type="project" value="InterPro"/>
</dbReference>
<dbReference type="GO" id="GO:0046761">
    <property type="term" value="P:viral budding from plasma membrane"/>
    <property type="evidence" value="ECO:0007669"/>
    <property type="project" value="UniProtKB-UniRule"/>
</dbReference>
<dbReference type="CDD" id="cd15483">
    <property type="entry name" value="Influenza_NA"/>
    <property type="match status" value="1"/>
</dbReference>
<dbReference type="Gene3D" id="2.120.10.10">
    <property type="match status" value="1"/>
</dbReference>
<dbReference type="HAMAP" id="MF_04071">
    <property type="entry name" value="INFV_NRAM"/>
    <property type="match status" value="1"/>
</dbReference>
<dbReference type="InterPro" id="IPR001860">
    <property type="entry name" value="Glyco_hydro_34"/>
</dbReference>
<dbReference type="InterPro" id="IPR033654">
    <property type="entry name" value="Sialidase_Influenza_A/B"/>
</dbReference>
<dbReference type="InterPro" id="IPR036278">
    <property type="entry name" value="Sialidase_sf"/>
</dbReference>
<dbReference type="Pfam" id="PF00064">
    <property type="entry name" value="Neur"/>
    <property type="match status" value="1"/>
</dbReference>
<dbReference type="SUPFAM" id="SSF50939">
    <property type="entry name" value="Sialidases"/>
    <property type="match status" value="1"/>
</dbReference>
<organismHost>
    <name type="scientific">Aves</name>
    <dbReference type="NCBI Taxonomy" id="8782"/>
</organismHost>
<organismHost>
    <name type="scientific">Homo sapiens</name>
    <name type="common">Human</name>
    <dbReference type="NCBI Taxonomy" id="9606"/>
</organismHost>
<organismHost>
    <name type="scientific">Phocidae</name>
    <name type="common">true seals</name>
    <dbReference type="NCBI Taxonomy" id="9709"/>
</organismHost>
<organismHost>
    <name type="scientific">Sus scrofa</name>
    <name type="common">Pig</name>
    <dbReference type="NCBI Taxonomy" id="9823"/>
</organismHost>
<gene>
    <name evidence="1" type="primary">NA</name>
</gene>
<accession>O91744</accession>
<reference key="1">
    <citation type="journal article" date="1998" name="J. Virol.">
        <title>Phylogenetic analysis of the entire genome of influenza A (H3N2) viruses from Japan: evidence for genetic reassortment of the six internal genes.</title>
        <authorList>
            <person name="Lindstrom S.E."/>
            <person name="Hiromoto Y."/>
            <person name="Nerome R."/>
            <person name="Omoe K."/>
            <person name="Sugita S."/>
            <person name="Yamazaki Y."/>
            <person name="Takahashi T."/>
            <person name="Nerome K."/>
        </authorList>
    </citation>
    <scope>NUCLEOTIDE SEQUENCE [GENOMIC RNA]</scope>
</reference>
<reference key="2">
    <citation type="journal article" date="2004" name="Virus Res.">
        <title>Assembly and budding of influenza virus.</title>
        <authorList>
            <person name="Nayak D.P."/>
            <person name="Hui E.K."/>
            <person name="Barman S."/>
        </authorList>
    </citation>
    <scope>REVIEW</scope>
</reference>
<reference key="3">
    <citation type="journal article" date="2005" name="N. Engl. J. Med.">
        <title>Neuraminidase inhibitors for influenza.</title>
        <authorList>
            <person name="Moscona A."/>
        </authorList>
    </citation>
    <scope>REVIEW</scope>
</reference>
<reference key="4">
    <citation type="journal article" date="2005" name="Biol. Pharm. Bull.">
        <title>Sialobiology of influenza: molecular mechanism of host range variation of influenza viruses.</title>
        <authorList>
            <person name="Suzuki Y."/>
        </authorList>
    </citation>
    <scope>REVIEW</scope>
</reference>
<keyword id="KW-0106">Calcium</keyword>
<keyword id="KW-1015">Disulfide bond</keyword>
<keyword id="KW-0325">Glycoprotein</keyword>
<keyword id="KW-0326">Glycosidase</keyword>
<keyword id="KW-1032">Host cell membrane</keyword>
<keyword id="KW-1043">Host membrane</keyword>
<keyword id="KW-0378">Hydrolase</keyword>
<keyword id="KW-0472">Membrane</keyword>
<keyword id="KW-0479">Metal-binding</keyword>
<keyword id="KW-0735">Signal-anchor</keyword>
<keyword id="KW-0812">Transmembrane</keyword>
<keyword id="KW-1133">Transmembrane helix</keyword>
<keyword id="KW-0946">Virion</keyword>
<evidence type="ECO:0000255" key="1">
    <source>
        <dbReference type="HAMAP-Rule" id="MF_04071"/>
    </source>
</evidence>
<evidence type="ECO:0000256" key="2">
    <source>
        <dbReference type="SAM" id="MobiDB-lite"/>
    </source>
</evidence>
<sequence>MNPNQKIITIGSVSLTIATICFLMQIAILVTTVTLHFKQYECSSPPNNQVIPCQPTIIERNITEIVYLTNTTIEKEICPKLVEYRNWSKPQCKITGFAPFSKDNSIRLSAGGDIWVTREPYVSCDPGKCYQFALGQGTTLNNRHSNDTVHDRTPYRTLLMNELGVPFHLGTKQVCIAWSSSSCHDGKAWLHVCVTGHDENATASFIYDGRLVDSIGSWSKNILRTQESECVCINGTCTVVMTDGSASERADTKILFIEEGKVVHISPLSGSAQHVEECSCYPRYPGVRCVCRDNWKGSNRPIVDINVKDYSIVSSYVCSGLVGDTPRKNDSSSSSYCQNPNNEKGSHGVKGWAFDDGNDVWMGRTISEELRSGYETFKVIGGWSTPNSKLQINRQVIVDSGNRSGYSGIFSVEGKSCINRCFYVELIRGRKQETKVWWTSNSIVVFCGTSGTYGTGSWPDGADINLMPI</sequence>
<comment type="function">
    <text evidence="1">Catalyzes the removal of terminal sialic acid residues from viral and cellular glycoconjugates. Cleaves off the terminal sialic acids on the glycosylated HA during virus budding to facilitate virus release. Additionally helps virus spread through the circulation by further removing sialic acids from the cell surface. These cleavages prevent self-aggregation and ensure the efficient spread of the progeny virus from cell to cell. Otherwise, infection would be limited to one round of replication. Described as a receptor-destroying enzyme because it cleaves a terminal sialic acid from the cellular receptors. May facilitate viral invasion of the upper airways by cleaving the sialic acid moieties on the mucin of the airway epithelial cells. Likely to plays a role in the budding process through its association with lipid rafts during intracellular transport. May additionally display a raft-association independent effect on budding. Plays a role in the determination of host range restriction on replication and virulence. Sialidase activity in late endosome/lysosome traffic seems to enhance virus replication.</text>
</comment>
<comment type="catalytic activity">
    <reaction evidence="1">
        <text>Hydrolysis of alpha-(2-&gt;3)-, alpha-(2-&gt;6)-, alpha-(2-&gt;8)- glycosidic linkages of terminal sialic acid residues in oligosaccharides, glycoproteins, glycolipids, colominic acid and synthetic substrates.</text>
        <dbReference type="EC" id="3.2.1.18"/>
    </reaction>
</comment>
<comment type="cofactor">
    <cofactor evidence="1">
        <name>Ca(2+)</name>
        <dbReference type="ChEBI" id="CHEBI:29108"/>
    </cofactor>
</comment>
<comment type="activity regulation">
    <text evidence="1">Inhibited by the neuraminidase inhibitors zanamivir (Relenza) and oseltamivir (Tamiflu). These drugs interfere with the release of progeny virus from infected cells and are effective against all influenza strains. Resistance to neuraminidase inhibitors is quite rare.</text>
</comment>
<comment type="subunit">
    <text evidence="1">Homotetramer.</text>
</comment>
<comment type="subcellular location">
    <subcellularLocation>
        <location evidence="1">Virion membrane</location>
    </subcellularLocation>
    <subcellularLocation>
        <location evidence="1">Host apical cell membrane</location>
        <topology evidence="1">Single-pass type II membrane protein</topology>
    </subcellularLocation>
    <text evidence="1">Preferentially accumulates at the apical plasma membrane in infected polarized epithelial cells, which is the virus assembly site. Uses lipid rafts for cell surface transport and apical sorting. In the virion, forms a mushroom-shaped spike on the surface of the membrane.</text>
</comment>
<comment type="domain">
    <text evidence="1">Intact N-terminus is essential for virion morphogenesis. Possesses two apical sorting signals, one in the ectodomain, which is likely to be a glycan, and the other in the transmembrane domain. The transmembrane domain also plays a role in lipid raft association.</text>
</comment>
<comment type="PTM">
    <text evidence="1">N-glycosylated.</text>
</comment>
<comment type="miscellaneous">
    <text>The influenza A genome consist of 8 RNA segments. Genetic variation of hemagglutinin and/or neuraminidase genes results in the emergence of new influenza strains. The mechanism of variation can be the result of point mutations or the result of genetic reassortment between segments of two different strains.</text>
</comment>
<comment type="similarity">
    <text evidence="1">Belongs to the glycosyl hydrolase 34 family.</text>
</comment>
<feature type="chain" id="PRO_0000078704" description="Neuraminidase">
    <location>
        <begin position="1"/>
        <end position="469"/>
    </location>
</feature>
<feature type="topological domain" description="Intravirion" evidence="1">
    <location>
        <begin position="1"/>
        <end position="9"/>
    </location>
</feature>
<feature type="transmembrane region" description="Helical" evidence="1">
    <location>
        <begin position="10"/>
        <end position="30"/>
    </location>
</feature>
<feature type="topological domain" description="Virion surface" evidence="1">
    <location>
        <begin position="31"/>
        <end position="469"/>
    </location>
</feature>
<feature type="region of interest" description="Involved in apical transport and lipid raft association" evidence="1">
    <location>
        <begin position="11"/>
        <end position="33"/>
    </location>
</feature>
<feature type="region of interest" description="Hypervariable stalk region" evidence="1">
    <location>
        <begin position="36"/>
        <end position="88"/>
    </location>
</feature>
<feature type="region of interest" description="Head of neuraminidase" evidence="1">
    <location>
        <begin position="91"/>
        <end position="469"/>
    </location>
</feature>
<feature type="region of interest" description="Disordered" evidence="2">
    <location>
        <begin position="326"/>
        <end position="350"/>
    </location>
</feature>
<feature type="compositionally biased region" description="Polar residues" evidence="2">
    <location>
        <begin position="331"/>
        <end position="343"/>
    </location>
</feature>
<feature type="active site" description="Proton donor/acceptor" evidence="1">
    <location>
        <position position="151"/>
    </location>
</feature>
<feature type="active site" description="Nucleophile" evidence="1">
    <location>
        <position position="406"/>
    </location>
</feature>
<feature type="binding site" evidence="1">
    <location>
        <position position="118"/>
    </location>
    <ligand>
        <name>substrate</name>
    </ligand>
</feature>
<feature type="binding site" evidence="1">
    <location>
        <position position="152"/>
    </location>
    <ligand>
        <name>substrate</name>
    </ligand>
</feature>
<feature type="binding site" evidence="1">
    <location>
        <begin position="276"/>
        <end position="277"/>
    </location>
    <ligand>
        <name>substrate</name>
    </ligand>
</feature>
<feature type="binding site" evidence="1">
    <location>
        <position position="292"/>
    </location>
    <ligand>
        <name>substrate</name>
    </ligand>
</feature>
<feature type="binding site" evidence="1">
    <location>
        <position position="293"/>
    </location>
    <ligand>
        <name>Ca(2+)</name>
        <dbReference type="ChEBI" id="CHEBI:29108"/>
    </ligand>
</feature>
<feature type="binding site" evidence="1">
    <location>
        <position position="297"/>
    </location>
    <ligand>
        <name>Ca(2+)</name>
        <dbReference type="ChEBI" id="CHEBI:29108"/>
    </ligand>
</feature>
<feature type="binding site" evidence="1">
    <location>
        <position position="324"/>
    </location>
    <ligand>
        <name>Ca(2+)</name>
        <dbReference type="ChEBI" id="CHEBI:29108"/>
    </ligand>
</feature>
<feature type="binding site" evidence="1">
    <location>
        <position position="371"/>
    </location>
    <ligand>
        <name>substrate</name>
    </ligand>
</feature>
<feature type="glycosylation site" description="N-linked (GlcNAc...) asparagine; by host" evidence="1">
    <location>
        <position position="61"/>
    </location>
</feature>
<feature type="glycosylation site" description="N-linked (GlcNAc...) asparagine; by host" evidence="1">
    <location>
        <position position="70"/>
    </location>
</feature>
<feature type="glycosylation site" description="N-linked (GlcNAc...) asparagine; by host" evidence="1">
    <location>
        <position position="86"/>
    </location>
</feature>
<feature type="glycosylation site" description="N-linked (GlcNAc...) asparagine; by host" evidence="1">
    <location>
        <position position="146"/>
    </location>
</feature>
<feature type="glycosylation site" description="N-linked (GlcNAc...) asparagine; by host" evidence="1">
    <location>
        <position position="200"/>
    </location>
</feature>
<feature type="glycosylation site" description="N-linked (GlcNAc...) asparagine; by host" evidence="1">
    <location>
        <position position="234"/>
    </location>
</feature>
<feature type="glycosylation site" description="N-linked (GlcNAc...) asparagine; by host" evidence="1">
    <location>
        <position position="329"/>
    </location>
</feature>
<feature type="glycosylation site" description="N-linked (GlcNAc...) asparagine; by host" evidence="1">
    <location>
        <position position="402"/>
    </location>
</feature>
<feature type="disulfide bond" evidence="1">
    <location>
        <begin position="92"/>
        <end position="417"/>
    </location>
</feature>
<feature type="disulfide bond" evidence="1">
    <location>
        <begin position="124"/>
        <end position="129"/>
    </location>
</feature>
<feature type="disulfide bond" evidence="1">
    <location>
        <begin position="183"/>
        <end position="230"/>
    </location>
</feature>
<feature type="disulfide bond" evidence="1">
    <location>
        <begin position="232"/>
        <end position="237"/>
    </location>
</feature>
<feature type="disulfide bond" evidence="1">
    <location>
        <begin position="278"/>
        <end position="291"/>
    </location>
</feature>
<feature type="disulfide bond" evidence="1">
    <location>
        <begin position="280"/>
        <end position="289"/>
    </location>
</feature>
<feature type="disulfide bond" evidence="1">
    <location>
        <begin position="318"/>
        <end position="337"/>
    </location>
</feature>
<feature type="disulfide bond" evidence="1">
    <location>
        <begin position="421"/>
        <end position="447"/>
    </location>
</feature>
<name>NRAM_I93A0</name>
<protein>
    <recommendedName>
        <fullName evidence="1">Neuraminidase</fullName>
        <ecNumber evidence="1">3.2.1.18</ecNumber>
    </recommendedName>
</protein>